<proteinExistence type="inferred from homology"/>
<keyword id="KW-0464">Manganese</keyword>
<keyword id="KW-0479">Metal-binding</keyword>
<keyword id="KW-0560">Oxidoreductase</keyword>
<keyword id="KW-0597">Phosphoprotein</keyword>
<organism>
    <name type="scientific">Bacillus caldotenax</name>
    <dbReference type="NCBI Taxonomy" id="1395"/>
    <lineage>
        <taxon>Bacteria</taxon>
        <taxon>Bacillati</taxon>
        <taxon>Bacillota</taxon>
        <taxon>Bacilli</taxon>
        <taxon>Bacillales</taxon>
        <taxon>Anoxybacillaceae</taxon>
        <taxon>Geobacillus</taxon>
        <taxon>Geobacillus thermoleovorans group</taxon>
    </lineage>
</organism>
<name>SODM_BACCA</name>
<comment type="function">
    <text>Destroys superoxide anion radicals which are normally produced within the cells and which are toxic to biological systems.</text>
</comment>
<comment type="catalytic activity">
    <reaction>
        <text>2 superoxide + 2 H(+) = H2O2 + O2</text>
        <dbReference type="Rhea" id="RHEA:20696"/>
        <dbReference type="ChEBI" id="CHEBI:15378"/>
        <dbReference type="ChEBI" id="CHEBI:15379"/>
        <dbReference type="ChEBI" id="CHEBI:16240"/>
        <dbReference type="ChEBI" id="CHEBI:18421"/>
        <dbReference type="EC" id="1.15.1.1"/>
    </reaction>
</comment>
<comment type="cofactor">
    <cofactor evidence="1">
        <name>Mn(2+)</name>
        <dbReference type="ChEBI" id="CHEBI:29035"/>
    </cofactor>
    <text evidence="1">Binds 1 Mn(2+) ion per subunit.</text>
</comment>
<comment type="subunit">
    <text>Homodimer.</text>
</comment>
<comment type="similarity">
    <text evidence="2">Belongs to the iron/manganese superoxide dismutase family.</text>
</comment>
<sequence length="204" mass="22890">MPFELPALPYPYDALEPHIDKETMNIHHTKHHNTYVTNLNAALEGHPDLQNKSLEELLSNLEALPESIRTAVRNNGGGHANHSLFWTILSPNGGGEPTGELAEAINKKFGSFTAFKDEFSKAAAGRFGSGWAWLVVNNGELEITSTPNQDSPIMEGKTPILGLDVWEHAYYLKYQNRRPEYIAAFWNIVNWDEVAKRYSEAKAK</sequence>
<gene>
    <name type="primary">sodA</name>
</gene>
<dbReference type="EC" id="1.15.1.1"/>
<dbReference type="EMBL" id="X62682">
    <property type="protein sequence ID" value="CAA44556.1"/>
    <property type="molecule type" value="Genomic_DNA"/>
</dbReference>
<dbReference type="PIR" id="S22053">
    <property type="entry name" value="S22053"/>
</dbReference>
<dbReference type="SMR" id="P28760"/>
<dbReference type="GO" id="GO:0005737">
    <property type="term" value="C:cytoplasm"/>
    <property type="evidence" value="ECO:0007669"/>
    <property type="project" value="TreeGrafter"/>
</dbReference>
<dbReference type="GO" id="GO:0046872">
    <property type="term" value="F:metal ion binding"/>
    <property type="evidence" value="ECO:0007669"/>
    <property type="project" value="UniProtKB-KW"/>
</dbReference>
<dbReference type="GO" id="GO:0004784">
    <property type="term" value="F:superoxide dismutase activity"/>
    <property type="evidence" value="ECO:0007669"/>
    <property type="project" value="UniProtKB-EC"/>
</dbReference>
<dbReference type="FunFam" id="1.10.287.990:FF:000001">
    <property type="entry name" value="Superoxide dismutase"/>
    <property type="match status" value="1"/>
</dbReference>
<dbReference type="FunFam" id="3.55.40.20:FF:000001">
    <property type="entry name" value="Superoxide dismutase"/>
    <property type="match status" value="1"/>
</dbReference>
<dbReference type="Gene3D" id="1.10.287.990">
    <property type="entry name" value="Fe,Mn superoxide dismutase (SOD) domain"/>
    <property type="match status" value="1"/>
</dbReference>
<dbReference type="Gene3D" id="3.55.40.20">
    <property type="entry name" value="Iron/manganese superoxide dismutase, C-terminal domain"/>
    <property type="match status" value="1"/>
</dbReference>
<dbReference type="InterPro" id="IPR001189">
    <property type="entry name" value="Mn/Fe_SOD"/>
</dbReference>
<dbReference type="InterPro" id="IPR019833">
    <property type="entry name" value="Mn/Fe_SOD_BS"/>
</dbReference>
<dbReference type="InterPro" id="IPR019832">
    <property type="entry name" value="Mn/Fe_SOD_C"/>
</dbReference>
<dbReference type="InterPro" id="IPR019831">
    <property type="entry name" value="Mn/Fe_SOD_N"/>
</dbReference>
<dbReference type="InterPro" id="IPR036324">
    <property type="entry name" value="Mn/Fe_SOD_N_sf"/>
</dbReference>
<dbReference type="InterPro" id="IPR036314">
    <property type="entry name" value="SOD_C_sf"/>
</dbReference>
<dbReference type="PANTHER" id="PTHR43595">
    <property type="entry name" value="37S RIBOSOMAL PROTEIN S26, MITOCHONDRIAL"/>
    <property type="match status" value="1"/>
</dbReference>
<dbReference type="PANTHER" id="PTHR43595:SF2">
    <property type="entry name" value="SMALL RIBOSOMAL SUBUNIT PROTEIN MS42"/>
    <property type="match status" value="1"/>
</dbReference>
<dbReference type="Pfam" id="PF02777">
    <property type="entry name" value="Sod_Fe_C"/>
    <property type="match status" value="1"/>
</dbReference>
<dbReference type="Pfam" id="PF00081">
    <property type="entry name" value="Sod_Fe_N"/>
    <property type="match status" value="1"/>
</dbReference>
<dbReference type="PIRSF" id="PIRSF000349">
    <property type="entry name" value="SODismutase"/>
    <property type="match status" value="1"/>
</dbReference>
<dbReference type="PRINTS" id="PR01703">
    <property type="entry name" value="MNSODISMTASE"/>
</dbReference>
<dbReference type="SUPFAM" id="SSF54719">
    <property type="entry name" value="Fe,Mn superoxide dismutase (SOD), C-terminal domain"/>
    <property type="match status" value="1"/>
</dbReference>
<dbReference type="SUPFAM" id="SSF46609">
    <property type="entry name" value="Fe,Mn superoxide dismutase (SOD), N-terminal domain"/>
    <property type="match status" value="1"/>
</dbReference>
<dbReference type="PROSITE" id="PS00088">
    <property type="entry name" value="SOD_MN"/>
    <property type="match status" value="1"/>
</dbReference>
<feature type="initiator methionine" description="Removed" evidence="1">
    <location>
        <position position="1"/>
    </location>
</feature>
<feature type="chain" id="PRO_0000160014" description="Superoxide dismutase [Mn]">
    <location>
        <begin position="2"/>
        <end position="204"/>
    </location>
</feature>
<feature type="binding site" evidence="1">
    <location>
        <position position="27"/>
    </location>
    <ligand>
        <name>Mn(2+)</name>
        <dbReference type="ChEBI" id="CHEBI:29035"/>
    </ligand>
</feature>
<feature type="binding site" evidence="1">
    <location>
        <position position="82"/>
    </location>
    <ligand>
        <name>Mn(2+)</name>
        <dbReference type="ChEBI" id="CHEBI:29035"/>
    </ligand>
</feature>
<feature type="binding site" evidence="1">
    <location>
        <position position="164"/>
    </location>
    <ligand>
        <name>Mn(2+)</name>
        <dbReference type="ChEBI" id="CHEBI:29035"/>
    </ligand>
</feature>
<feature type="binding site" evidence="1">
    <location>
        <position position="168"/>
    </location>
    <ligand>
        <name>Mn(2+)</name>
        <dbReference type="ChEBI" id="CHEBI:29035"/>
    </ligand>
</feature>
<feature type="modified residue" description="Phosphothreonine" evidence="1">
    <location>
        <position position="34"/>
    </location>
</feature>
<feature type="modified residue" description="Phosphothreonine" evidence="1">
    <location>
        <position position="70"/>
    </location>
</feature>
<evidence type="ECO:0000250" key="1"/>
<evidence type="ECO:0000305" key="2"/>
<protein>
    <recommendedName>
        <fullName>Superoxide dismutase [Mn]</fullName>
        <ecNumber>1.15.1.1</ecNumber>
    </recommendedName>
</protein>
<reference key="1">
    <citation type="journal article" date="1992" name="FEMS Microbiol. Lett.">
        <title>Physical characterisation and over-expression of the Bacillus caldotenax superoxide dismutase gene.</title>
        <authorList>
            <person name="Chambers S.P."/>
            <person name="Brehm J.K."/>
            <person name="Michael N.P."/>
            <person name="Atkinson T."/>
            <person name="Minton N.P."/>
        </authorList>
    </citation>
    <scope>NUCLEOTIDE SEQUENCE [GENOMIC DNA]</scope>
    <source>
        <strain>YT1</strain>
    </source>
</reference>
<accession>P28760</accession>